<feature type="chain" id="PRO_0000299420" description="Uncharacterized peptidase SAOUHSC_01816">
    <location>
        <begin position="1"/>
        <end position="351"/>
    </location>
</feature>
<feature type="binding site" evidence="1">
    <location>
        <position position="215"/>
    </location>
    <ligand>
        <name>Mn(2+)</name>
        <dbReference type="ChEBI" id="CHEBI:29035"/>
        <label>2</label>
    </ligand>
</feature>
<feature type="binding site" evidence="1">
    <location>
        <position position="226"/>
    </location>
    <ligand>
        <name>Mn(2+)</name>
        <dbReference type="ChEBI" id="CHEBI:29035"/>
        <label>1</label>
    </ligand>
</feature>
<feature type="binding site" evidence="1">
    <location>
        <position position="226"/>
    </location>
    <ligand>
        <name>Mn(2+)</name>
        <dbReference type="ChEBI" id="CHEBI:29035"/>
        <label>2</label>
    </ligand>
</feature>
<feature type="binding site" evidence="1">
    <location>
        <position position="290"/>
    </location>
    <ligand>
        <name>Mn(2+)</name>
        <dbReference type="ChEBI" id="CHEBI:29035"/>
        <label>1</label>
    </ligand>
</feature>
<feature type="binding site" evidence="1">
    <location>
        <position position="319"/>
    </location>
    <ligand>
        <name>Mn(2+)</name>
        <dbReference type="ChEBI" id="CHEBI:29035"/>
        <label>1</label>
    </ligand>
</feature>
<feature type="binding site" evidence="1">
    <location>
        <position position="333"/>
    </location>
    <ligand>
        <name>Mn(2+)</name>
        <dbReference type="ChEBI" id="CHEBI:29035"/>
        <label>1</label>
    </ligand>
</feature>
<feature type="binding site" evidence="1">
    <location>
        <position position="333"/>
    </location>
    <ligand>
        <name>Mn(2+)</name>
        <dbReference type="ChEBI" id="CHEBI:29035"/>
        <label>2</label>
    </ligand>
</feature>
<evidence type="ECO:0000255" key="1"/>
<evidence type="ECO:0000305" key="2"/>
<keyword id="KW-0378">Hydrolase</keyword>
<keyword id="KW-0464">Manganese</keyword>
<keyword id="KW-0479">Metal-binding</keyword>
<keyword id="KW-1185">Reference proteome</keyword>
<sequence length="351" mass="39554">MTKISKIIDELNNQQADAAWITTPLNVYYFTGYRSEPHERLFALLIKKDGKQVLFCPKMEVEEVKASPFTGEIVGYLDTENPFSLYPQTINKLLIESEHLTVARQKQLISGFNVNSFGDVDLTIKQLRNIKSEDEISKIRKAAELADKCIEIGVSYLKEGVTECEVVNHIEQTIKQYGVNEMSFDTMVLFGDHAASPHGTPGDRRLKSNEYVLFDLGVIYEHYCSDMTRTIKFGEPSKEAQEIYNIVLEAETSAIQAIKPGIPLKDIDHIARNIISEKGYGEYFPHRLGHGLGLQEHEYQDVSSTNSNLLEAGMVITIEPGIYVPGVAGVRIEDDILVTNEGYEVLTHYEK</sequence>
<reference key="1">
    <citation type="book" date="2006" name="Gram positive pathogens, 2nd edition">
        <title>The Staphylococcus aureus NCTC 8325 genome.</title>
        <editorList>
            <person name="Fischetti V."/>
            <person name="Novick R."/>
            <person name="Ferretti J."/>
            <person name="Portnoy D."/>
            <person name="Rood J."/>
        </editorList>
        <authorList>
            <person name="Gillaspy A.F."/>
            <person name="Worrell V."/>
            <person name="Orvis J."/>
            <person name="Roe B.A."/>
            <person name="Dyer D.W."/>
            <person name="Iandolo J.J."/>
        </authorList>
    </citation>
    <scope>NUCLEOTIDE SEQUENCE [LARGE SCALE GENOMIC DNA]</scope>
    <source>
        <strain>NCTC 8325 / PS 47</strain>
    </source>
</reference>
<protein>
    <recommendedName>
        <fullName>Uncharacterized peptidase SAOUHSC_01816</fullName>
        <ecNumber>3.4.-.-</ecNumber>
    </recommendedName>
</protein>
<name>Y1816_STAA8</name>
<organism>
    <name type="scientific">Staphylococcus aureus (strain NCTC 8325 / PS 47)</name>
    <dbReference type="NCBI Taxonomy" id="93061"/>
    <lineage>
        <taxon>Bacteria</taxon>
        <taxon>Bacillati</taxon>
        <taxon>Bacillota</taxon>
        <taxon>Bacilli</taxon>
        <taxon>Bacillales</taxon>
        <taxon>Staphylococcaceae</taxon>
        <taxon>Staphylococcus</taxon>
    </lineage>
</organism>
<gene>
    <name type="ordered locus">SAOUHSC_01816</name>
</gene>
<dbReference type="EC" id="3.4.-.-"/>
<dbReference type="EMBL" id="CP000253">
    <property type="protein sequence ID" value="ABD30884.1"/>
    <property type="molecule type" value="Genomic_DNA"/>
</dbReference>
<dbReference type="RefSeq" id="WP_000161661.1">
    <property type="nucleotide sequence ID" value="NZ_LS483365.1"/>
</dbReference>
<dbReference type="RefSeq" id="YP_500321.1">
    <property type="nucleotide sequence ID" value="NC_007795.1"/>
</dbReference>
<dbReference type="SMR" id="Q2FXL9"/>
<dbReference type="STRING" id="93061.SAOUHSC_01816"/>
<dbReference type="PaxDb" id="1280-SAXN108_1736"/>
<dbReference type="GeneID" id="3919286"/>
<dbReference type="KEGG" id="sao:SAOUHSC_01816"/>
<dbReference type="PATRIC" id="fig|93061.5.peg.1656"/>
<dbReference type="eggNOG" id="COG0006">
    <property type="taxonomic scope" value="Bacteria"/>
</dbReference>
<dbReference type="HOGENOM" id="CLU_017266_4_2_9"/>
<dbReference type="OrthoDB" id="9806388at2"/>
<dbReference type="PRO" id="PR:Q2FXL9"/>
<dbReference type="Proteomes" id="UP000008816">
    <property type="component" value="Chromosome"/>
</dbReference>
<dbReference type="GO" id="GO:0046872">
    <property type="term" value="F:metal ion binding"/>
    <property type="evidence" value="ECO:0007669"/>
    <property type="project" value="UniProtKB-KW"/>
</dbReference>
<dbReference type="GO" id="GO:0070006">
    <property type="term" value="F:metalloaminopeptidase activity"/>
    <property type="evidence" value="ECO:0000318"/>
    <property type="project" value="GO_Central"/>
</dbReference>
<dbReference type="GO" id="GO:0006508">
    <property type="term" value="P:proteolysis"/>
    <property type="evidence" value="ECO:0000318"/>
    <property type="project" value="GO_Central"/>
</dbReference>
<dbReference type="CDD" id="cd01092">
    <property type="entry name" value="APP-like"/>
    <property type="match status" value="1"/>
</dbReference>
<dbReference type="FunFam" id="3.90.230.10:FF:000014">
    <property type="entry name" value="Aminopeptidase P family protein"/>
    <property type="match status" value="1"/>
</dbReference>
<dbReference type="Gene3D" id="3.90.230.10">
    <property type="entry name" value="Creatinase/methionine aminopeptidase superfamily"/>
    <property type="match status" value="1"/>
</dbReference>
<dbReference type="Gene3D" id="3.40.350.10">
    <property type="entry name" value="Creatinase/prolidase N-terminal domain"/>
    <property type="match status" value="1"/>
</dbReference>
<dbReference type="InterPro" id="IPR029149">
    <property type="entry name" value="Creatin/AminoP/Spt16_N"/>
</dbReference>
<dbReference type="InterPro" id="IPR036005">
    <property type="entry name" value="Creatinase/aminopeptidase-like"/>
</dbReference>
<dbReference type="InterPro" id="IPR000587">
    <property type="entry name" value="Creatinase_N"/>
</dbReference>
<dbReference type="InterPro" id="IPR000994">
    <property type="entry name" value="Pept_M24"/>
</dbReference>
<dbReference type="InterPro" id="IPR050659">
    <property type="entry name" value="Peptidase_M24B"/>
</dbReference>
<dbReference type="InterPro" id="IPR001131">
    <property type="entry name" value="Peptidase_M24B_aminopep-P_CS"/>
</dbReference>
<dbReference type="PANTHER" id="PTHR46112">
    <property type="entry name" value="AMINOPEPTIDASE"/>
    <property type="match status" value="1"/>
</dbReference>
<dbReference type="PANTHER" id="PTHR46112:SF10">
    <property type="entry name" value="DIPEPTIDASE YKVY-RELATED"/>
    <property type="match status" value="1"/>
</dbReference>
<dbReference type="Pfam" id="PF01321">
    <property type="entry name" value="Creatinase_N"/>
    <property type="match status" value="1"/>
</dbReference>
<dbReference type="Pfam" id="PF00557">
    <property type="entry name" value="Peptidase_M24"/>
    <property type="match status" value="1"/>
</dbReference>
<dbReference type="SUPFAM" id="SSF55920">
    <property type="entry name" value="Creatinase/aminopeptidase"/>
    <property type="match status" value="1"/>
</dbReference>
<dbReference type="SUPFAM" id="SSF53092">
    <property type="entry name" value="Creatinase/prolidase N-terminal domain"/>
    <property type="match status" value="1"/>
</dbReference>
<dbReference type="PROSITE" id="PS00491">
    <property type="entry name" value="PROLINE_PEPTIDASE"/>
    <property type="match status" value="1"/>
</dbReference>
<comment type="cofactor">
    <cofactor evidence="2">
        <name>Mn(2+)</name>
        <dbReference type="ChEBI" id="CHEBI:29035"/>
    </cofactor>
    <text evidence="2">Binds 2 manganese ions per subunit.</text>
</comment>
<comment type="similarity">
    <text evidence="2">Belongs to the peptidase M24B family.</text>
</comment>
<accession>Q2FXL9</accession>
<proteinExistence type="inferred from homology"/>